<protein>
    <recommendedName>
        <fullName evidence="1">Holliday junction branch migration complex subunit RuvA</fullName>
    </recommendedName>
</protein>
<proteinExistence type="inferred from homology"/>
<dbReference type="EMBL" id="AP008232">
    <property type="protein sequence ID" value="BAE74536.1"/>
    <property type="molecule type" value="Genomic_DNA"/>
</dbReference>
<dbReference type="RefSeq" id="WP_011411090.1">
    <property type="nucleotide sequence ID" value="NC_007712.1"/>
</dbReference>
<dbReference type="SMR" id="Q2NTI9"/>
<dbReference type="STRING" id="343509.SG1261"/>
<dbReference type="KEGG" id="sgl:SG1261"/>
<dbReference type="eggNOG" id="COG0632">
    <property type="taxonomic scope" value="Bacteria"/>
</dbReference>
<dbReference type="HOGENOM" id="CLU_087936_0_0_6"/>
<dbReference type="OrthoDB" id="5293449at2"/>
<dbReference type="BioCyc" id="SGLO343509:SGP1_RS11225-MONOMER"/>
<dbReference type="Proteomes" id="UP000001932">
    <property type="component" value="Chromosome"/>
</dbReference>
<dbReference type="GO" id="GO:0005737">
    <property type="term" value="C:cytoplasm"/>
    <property type="evidence" value="ECO:0007669"/>
    <property type="project" value="UniProtKB-SubCell"/>
</dbReference>
<dbReference type="GO" id="GO:0009379">
    <property type="term" value="C:Holliday junction helicase complex"/>
    <property type="evidence" value="ECO:0007669"/>
    <property type="project" value="InterPro"/>
</dbReference>
<dbReference type="GO" id="GO:0048476">
    <property type="term" value="C:Holliday junction resolvase complex"/>
    <property type="evidence" value="ECO:0007669"/>
    <property type="project" value="UniProtKB-UniRule"/>
</dbReference>
<dbReference type="GO" id="GO:0005524">
    <property type="term" value="F:ATP binding"/>
    <property type="evidence" value="ECO:0007669"/>
    <property type="project" value="InterPro"/>
</dbReference>
<dbReference type="GO" id="GO:0000400">
    <property type="term" value="F:four-way junction DNA binding"/>
    <property type="evidence" value="ECO:0007669"/>
    <property type="project" value="UniProtKB-UniRule"/>
</dbReference>
<dbReference type="GO" id="GO:0009378">
    <property type="term" value="F:four-way junction helicase activity"/>
    <property type="evidence" value="ECO:0007669"/>
    <property type="project" value="InterPro"/>
</dbReference>
<dbReference type="GO" id="GO:0006310">
    <property type="term" value="P:DNA recombination"/>
    <property type="evidence" value="ECO:0007669"/>
    <property type="project" value="UniProtKB-UniRule"/>
</dbReference>
<dbReference type="GO" id="GO:0006281">
    <property type="term" value="P:DNA repair"/>
    <property type="evidence" value="ECO:0007669"/>
    <property type="project" value="UniProtKB-UniRule"/>
</dbReference>
<dbReference type="CDD" id="cd14332">
    <property type="entry name" value="UBA_RuvA_C"/>
    <property type="match status" value="1"/>
</dbReference>
<dbReference type="FunFam" id="1.10.150.20:FF:000012">
    <property type="entry name" value="Holliday junction ATP-dependent DNA helicase RuvA"/>
    <property type="match status" value="1"/>
</dbReference>
<dbReference type="FunFam" id="2.40.50.140:FF:000083">
    <property type="entry name" value="Holliday junction ATP-dependent DNA helicase RuvA"/>
    <property type="match status" value="1"/>
</dbReference>
<dbReference type="Gene3D" id="1.10.150.20">
    <property type="entry name" value="5' to 3' exonuclease, C-terminal subdomain"/>
    <property type="match status" value="1"/>
</dbReference>
<dbReference type="Gene3D" id="1.10.8.10">
    <property type="entry name" value="DNA helicase RuvA subunit, C-terminal domain"/>
    <property type="match status" value="1"/>
</dbReference>
<dbReference type="Gene3D" id="2.40.50.140">
    <property type="entry name" value="Nucleic acid-binding proteins"/>
    <property type="match status" value="1"/>
</dbReference>
<dbReference type="HAMAP" id="MF_00031">
    <property type="entry name" value="DNA_HJ_migration_RuvA"/>
    <property type="match status" value="1"/>
</dbReference>
<dbReference type="InterPro" id="IPR013849">
    <property type="entry name" value="DNA_helicase_Holl-junc_RuvA_I"/>
</dbReference>
<dbReference type="InterPro" id="IPR003583">
    <property type="entry name" value="Hlx-hairpin-Hlx_DNA-bd_motif"/>
</dbReference>
<dbReference type="InterPro" id="IPR012340">
    <property type="entry name" value="NA-bd_OB-fold"/>
</dbReference>
<dbReference type="InterPro" id="IPR000085">
    <property type="entry name" value="RuvA"/>
</dbReference>
<dbReference type="InterPro" id="IPR010994">
    <property type="entry name" value="RuvA_2-like"/>
</dbReference>
<dbReference type="InterPro" id="IPR011114">
    <property type="entry name" value="RuvA_C"/>
</dbReference>
<dbReference type="InterPro" id="IPR036267">
    <property type="entry name" value="RuvA_C_sf"/>
</dbReference>
<dbReference type="NCBIfam" id="TIGR00084">
    <property type="entry name" value="ruvA"/>
    <property type="match status" value="1"/>
</dbReference>
<dbReference type="Pfam" id="PF14520">
    <property type="entry name" value="HHH_5"/>
    <property type="match status" value="1"/>
</dbReference>
<dbReference type="Pfam" id="PF07499">
    <property type="entry name" value="RuvA_C"/>
    <property type="match status" value="1"/>
</dbReference>
<dbReference type="Pfam" id="PF01330">
    <property type="entry name" value="RuvA_N"/>
    <property type="match status" value="1"/>
</dbReference>
<dbReference type="SMART" id="SM00278">
    <property type="entry name" value="HhH1"/>
    <property type="match status" value="2"/>
</dbReference>
<dbReference type="SUPFAM" id="SSF46929">
    <property type="entry name" value="DNA helicase RuvA subunit, C-terminal domain"/>
    <property type="match status" value="1"/>
</dbReference>
<dbReference type="SUPFAM" id="SSF50249">
    <property type="entry name" value="Nucleic acid-binding proteins"/>
    <property type="match status" value="1"/>
</dbReference>
<dbReference type="SUPFAM" id="SSF47781">
    <property type="entry name" value="RuvA domain 2-like"/>
    <property type="match status" value="1"/>
</dbReference>
<accession>Q2NTI9</accession>
<comment type="function">
    <text evidence="1">The RuvA-RuvB-RuvC complex processes Holliday junction (HJ) DNA during genetic recombination and DNA repair, while the RuvA-RuvB complex plays an important role in the rescue of blocked DNA replication forks via replication fork reversal (RFR). RuvA specifically binds to HJ cruciform DNA, conferring on it an open structure. The RuvB hexamer acts as an ATP-dependent pump, pulling dsDNA into and through the RuvAB complex. HJ branch migration allows RuvC to scan DNA until it finds its consensus sequence, where it cleaves and resolves the cruciform DNA.</text>
</comment>
<comment type="subunit">
    <text evidence="1">Homotetramer. Forms an RuvA(8)-RuvB(12)-Holliday junction (HJ) complex. HJ DNA is sandwiched between 2 RuvA tetramers; dsDNA enters through RuvA and exits via RuvB. An RuvB hexamer assembles on each DNA strand where it exits the tetramer. Each RuvB hexamer is contacted by two RuvA subunits (via domain III) on 2 adjacent RuvB subunits; this complex drives branch migration. In the full resolvosome a probable DNA-RuvA(4)-RuvB(12)-RuvC(2) complex forms which resolves the HJ.</text>
</comment>
<comment type="subcellular location">
    <subcellularLocation>
        <location evidence="1">Cytoplasm</location>
    </subcellularLocation>
</comment>
<comment type="domain">
    <text evidence="1">Has three domains with a flexible linker between the domains II and III and assumes an 'L' shape. Domain III is highly mobile and contacts RuvB.</text>
</comment>
<comment type="similarity">
    <text evidence="1">Belongs to the RuvA family.</text>
</comment>
<organism>
    <name type="scientific">Sodalis glossinidius (strain morsitans)</name>
    <dbReference type="NCBI Taxonomy" id="343509"/>
    <lineage>
        <taxon>Bacteria</taxon>
        <taxon>Pseudomonadati</taxon>
        <taxon>Pseudomonadota</taxon>
        <taxon>Gammaproteobacteria</taxon>
        <taxon>Enterobacterales</taxon>
        <taxon>Bruguierivoracaceae</taxon>
        <taxon>Sodalis</taxon>
    </lineage>
</organism>
<feature type="chain" id="PRO_1000002558" description="Holliday junction branch migration complex subunit RuvA">
    <location>
        <begin position="1"/>
        <end position="205"/>
    </location>
</feature>
<feature type="region of interest" description="Domain I" evidence="1">
    <location>
        <begin position="1"/>
        <end position="64"/>
    </location>
</feature>
<feature type="region of interest" description="Domain II" evidence="1">
    <location>
        <begin position="65"/>
        <end position="143"/>
    </location>
</feature>
<feature type="region of interest" description="Flexible linker" evidence="1">
    <location>
        <begin position="144"/>
        <end position="156"/>
    </location>
</feature>
<feature type="region of interest" description="Domain III" evidence="1">
    <location>
        <begin position="157"/>
        <end position="205"/>
    </location>
</feature>
<keyword id="KW-0963">Cytoplasm</keyword>
<keyword id="KW-0227">DNA damage</keyword>
<keyword id="KW-0233">DNA recombination</keyword>
<keyword id="KW-0234">DNA repair</keyword>
<keyword id="KW-0238">DNA-binding</keyword>
<reference key="1">
    <citation type="journal article" date="2006" name="Genome Res.">
        <title>Massive genome erosion and functional adaptations provide insights into the symbiotic lifestyle of Sodalis glossinidius in the tsetse host.</title>
        <authorList>
            <person name="Toh H."/>
            <person name="Weiss B.L."/>
            <person name="Perkin S.A.H."/>
            <person name="Yamashita A."/>
            <person name="Oshima K."/>
            <person name="Hattori M."/>
            <person name="Aksoy S."/>
        </authorList>
    </citation>
    <scope>NUCLEOTIDE SEQUENCE [LARGE SCALE GENOMIC DNA]</scope>
    <source>
        <strain>morsitans</strain>
    </source>
</reference>
<gene>
    <name evidence="1" type="primary">ruvA</name>
    <name type="ordered locus">SG1261</name>
</gene>
<sequence length="205" mass="22187">MIGRLRGIILEKQPPQVLLETHGVGYEVFMPMTCFYALPETGQEAVIFTHFVVREDAQLLFGFIHKQERVLFRELIKVNGVGPKLALAILSGMSAQQFISAVERQEINALVKLPGVGKKTAERLVVEMKDRFKGLSGDLFVPQGAGEIPAAIDAPAMPADPEGEAVAALVALGYKPQEASRMVSKVASAGSDCEMLIRDALRAAL</sequence>
<evidence type="ECO:0000255" key="1">
    <source>
        <dbReference type="HAMAP-Rule" id="MF_00031"/>
    </source>
</evidence>
<name>RUVA_SODGM</name>